<organism>
    <name type="scientific">Scolopendra mutilans</name>
    <name type="common">Chinese red-headed centipede</name>
    <name type="synonym">Scolopendra subspinipes mutilans</name>
    <dbReference type="NCBI Taxonomy" id="2836329"/>
    <lineage>
        <taxon>Eukaryota</taxon>
        <taxon>Metazoa</taxon>
        <taxon>Ecdysozoa</taxon>
        <taxon>Arthropoda</taxon>
        <taxon>Myriapoda</taxon>
        <taxon>Chilopoda</taxon>
        <taxon>Pleurostigmophora</taxon>
        <taxon>Scolopendromorpha</taxon>
        <taxon>Scolopendridae</taxon>
        <taxon>Scolopendra</taxon>
    </lineage>
</organism>
<feature type="signal peptide" evidence="2">
    <location>
        <begin position="1"/>
        <end position="19"/>
    </location>
</feature>
<feature type="propeptide" id="PRO_0000446854" evidence="1">
    <location>
        <begin position="20"/>
        <end position="39"/>
    </location>
</feature>
<feature type="chain" id="PRO_0000425476" description="Kappa-scoloptoxin(07)-Ssm2b" evidence="1">
    <location>
        <begin position="40"/>
        <end position="70"/>
    </location>
</feature>
<keyword id="KW-0165">Cleavage on pair of basic residues</keyword>
<keyword id="KW-1015">Disulfide bond</keyword>
<keyword id="KW-0872">Ion channel impairing toxin</keyword>
<keyword id="KW-0528">Neurotoxin</keyword>
<keyword id="KW-0632">Potassium channel impairing toxin</keyword>
<keyword id="KW-0964">Secreted</keyword>
<keyword id="KW-0732">Signal</keyword>
<keyword id="KW-0800">Toxin</keyword>
<keyword id="KW-1220">Voltage-gated potassium channel impairing toxin</keyword>
<dbReference type="EMBL" id="JQ757063">
    <property type="protein sequence ID" value="AFM55010.1"/>
    <property type="molecule type" value="mRNA"/>
</dbReference>
<dbReference type="GO" id="GO:0005576">
    <property type="term" value="C:extracellular region"/>
    <property type="evidence" value="ECO:0007669"/>
    <property type="project" value="UniProtKB-SubCell"/>
</dbReference>
<dbReference type="GO" id="GO:0015459">
    <property type="term" value="F:potassium channel regulator activity"/>
    <property type="evidence" value="ECO:0007669"/>
    <property type="project" value="UniProtKB-KW"/>
</dbReference>
<dbReference type="GO" id="GO:0090729">
    <property type="term" value="F:toxin activity"/>
    <property type="evidence" value="ECO:0007669"/>
    <property type="project" value="UniProtKB-KW"/>
</dbReference>
<comment type="function">
    <text evidence="1">Inhibits voltage-gated potassium channels.</text>
</comment>
<comment type="subcellular location">
    <subcellularLocation>
        <location evidence="5">Secreted</location>
    </subcellularLocation>
</comment>
<comment type="tissue specificity">
    <text evidence="5">Expressed by the venom gland.</text>
</comment>
<comment type="PTM">
    <text evidence="4">Contains 3 disulfide bonds.</text>
</comment>
<comment type="similarity">
    <text evidence="4">Belongs to the scoloptoxin-07 family.</text>
</comment>
<accession>I6S7G9</accession>
<evidence type="ECO:0000250" key="1">
    <source>
        <dbReference type="UniProtKB" id="I6RA66"/>
    </source>
</evidence>
<evidence type="ECO:0000255" key="2"/>
<evidence type="ECO:0000303" key="3">
    <source>
    </source>
</evidence>
<evidence type="ECO:0000305" key="4"/>
<evidence type="ECO:0000305" key="5">
    <source>
    </source>
</evidence>
<sequence>MLVFYALLFVSVFSSTVMGATIDKPILREAIEEIDVNKRAKNPYCKEENCPPGKHCPKVPIACVYGPCCF</sequence>
<name>TX72B_SCOMU</name>
<reference key="1">
    <citation type="journal article" date="2012" name="Mol. Cell. Proteomics">
        <title>Chemical punch packed in venoms makes centipedes excellent predators.</title>
        <authorList>
            <person name="Yang S."/>
            <person name="Liu Z."/>
            <person name="Xiao Y."/>
            <person name="Li Y."/>
            <person name="Rong M."/>
            <person name="Liang S."/>
            <person name="Zhang Z."/>
            <person name="Yu H."/>
            <person name="King G.F."/>
            <person name="Lai R."/>
        </authorList>
    </citation>
    <scope>NUCLEOTIDE SEQUENCE [MRNA]</scope>
    <source>
        <tissue>Venom gland</tissue>
    </source>
</reference>
<proteinExistence type="inferred from homology"/>
<protein>
    <recommendedName>
        <fullName evidence="1">Kappa-scoloptoxin(07)-Ssm2b</fullName>
        <shortName evidence="1">Kappa-SLPTX(07)-Ssm2b</shortName>
    </recommendedName>
    <alternativeName>
        <fullName evidence="3">Kappa-scoloptoxin-Ssm2b</fullName>
        <shortName evidence="3">Kappa-SLPTX-Ssm2b</shortName>
    </alternativeName>
</protein>